<feature type="chain" id="PRO_0000171686" description="Single-stranded DNA cytosine deaminase">
    <location>
        <begin position="1"/>
        <end position="198"/>
    </location>
</feature>
<feature type="domain" description="CMP/dCMP-type deaminase" evidence="5">
    <location>
        <begin position="23"/>
        <end position="129"/>
    </location>
</feature>
<feature type="region of interest" description="Interaction with SUPT6H" evidence="3">
    <location>
        <begin position="2"/>
        <end position="26"/>
    </location>
</feature>
<feature type="region of interest" description="Important for interaction with CTNNBL1" evidence="3">
    <location>
        <begin position="39"/>
        <end position="42"/>
    </location>
</feature>
<feature type="region of interest" description="Required for interaction with RNF126" evidence="3">
    <location>
        <begin position="88"/>
        <end position="116"/>
    </location>
</feature>
<feature type="short sequence motif" description="Bipartite nuclear localization signal" evidence="3">
    <location>
        <begin position="1"/>
        <end position="30"/>
    </location>
</feature>
<feature type="short sequence motif" description="Nuclear export signal" evidence="3">
    <location>
        <begin position="183"/>
        <end position="198"/>
    </location>
</feature>
<feature type="active site" description="Proton donor" evidence="2">
    <location>
        <position position="58"/>
    </location>
</feature>
<feature type="binding site" evidence="3">
    <location>
        <position position="56"/>
    </location>
    <ligand>
        <name>Zn(2+)</name>
        <dbReference type="ChEBI" id="CHEBI:29105"/>
        <note>catalytic</note>
    </ligand>
</feature>
<feature type="binding site" evidence="3">
    <location>
        <position position="87"/>
    </location>
    <ligand>
        <name>Zn(2+)</name>
        <dbReference type="ChEBI" id="CHEBI:29105"/>
        <note>catalytic</note>
    </ligand>
</feature>
<feature type="binding site" evidence="3">
    <location>
        <position position="90"/>
    </location>
    <ligand>
        <name>Zn(2+)</name>
        <dbReference type="ChEBI" id="CHEBI:29105"/>
        <note>catalytic</note>
    </ligand>
</feature>
<feature type="modified residue" description="Phosphothreonine; by PKA" evidence="3">
    <location>
        <position position="27"/>
    </location>
</feature>
<feature type="modified residue" description="Phosphoserine; by PKA" evidence="3">
    <location>
        <position position="38"/>
    </location>
</feature>
<proteinExistence type="evidence at transcript level"/>
<sequence>MDSLLMKQRKFLYHFKNVRWAKGRHETYLCYVVKRRDSATSFSLDFGHLRNKSGCHVELLFLRYISDWDLDPGRCYRVTWFTSWSPCYDCARHVADFLRGYPNLSLRIFAARLYFCEDRKAEPEGLRRLHRAGVQIAIMTFKDYFYCWNTFVENREKTFKAWEGLHENSVRLSRQLRRILLPLYEVDDLRDAFRTLGL</sequence>
<gene>
    <name type="primary">AICDA</name>
    <name type="synonym">AID</name>
</gene>
<keyword id="KW-0963">Cytoplasm</keyword>
<keyword id="KW-0378">Hydrolase</keyword>
<keyword id="KW-0479">Metal-binding</keyword>
<keyword id="KW-0507">mRNA processing</keyword>
<keyword id="KW-0539">Nucleus</keyword>
<keyword id="KW-0597">Phosphoprotein</keyword>
<keyword id="KW-1185">Reference proteome</keyword>
<keyword id="KW-0832">Ubl conjugation</keyword>
<keyword id="KW-0862">Zinc</keyword>
<evidence type="ECO:0000250" key="1"/>
<evidence type="ECO:0000250" key="2">
    <source>
        <dbReference type="UniProtKB" id="P0ABF6"/>
    </source>
</evidence>
<evidence type="ECO:0000250" key="3">
    <source>
        <dbReference type="UniProtKB" id="Q9GZX7"/>
    </source>
</evidence>
<evidence type="ECO:0000250" key="4">
    <source>
        <dbReference type="UniProtKB" id="Q9WVE0"/>
    </source>
</evidence>
<evidence type="ECO:0000255" key="5">
    <source>
        <dbReference type="PROSITE-ProRule" id="PRU01083"/>
    </source>
</evidence>
<evidence type="ECO:0000269" key="6">
    <source>
    </source>
</evidence>
<evidence type="ECO:0000305" key="7"/>
<comment type="function">
    <text evidence="3">Single-stranded DNA-specific cytidine deaminase. Involved in somatic hypermutation (SHM), gene conversion, and class-switch recombination (CSR) in B-lymphocytes by deaminating C to U during transcription of Ig-variable (V) and Ig-switch (S) region DNA. Required for several crucial steps of B-cell terminal differentiation necessary for efficient antibody responses. May also play a role in the epigenetic regulation of gene expression by participating in DNA demethylation.</text>
</comment>
<comment type="catalytic activity">
    <reaction evidence="3">
        <text>a 2'-deoxycytidine in single-stranded DNA + H2O + H(+) = a 2'-deoxyuridine in single-stranded DNA + NH4(+)</text>
        <dbReference type="Rhea" id="RHEA:50948"/>
        <dbReference type="Rhea" id="RHEA-COMP:12846"/>
        <dbReference type="Rhea" id="RHEA-COMP:12847"/>
        <dbReference type="ChEBI" id="CHEBI:15377"/>
        <dbReference type="ChEBI" id="CHEBI:15378"/>
        <dbReference type="ChEBI" id="CHEBI:28938"/>
        <dbReference type="ChEBI" id="CHEBI:85452"/>
        <dbReference type="ChEBI" id="CHEBI:133902"/>
        <dbReference type="EC" id="3.5.4.38"/>
    </reaction>
</comment>
<comment type="cofactor">
    <cofactor evidence="3">
        <name>Zn(2+)</name>
        <dbReference type="ChEBI" id="CHEBI:29105"/>
    </cofactor>
</comment>
<comment type="subunit">
    <text evidence="3 4">Interacts with CTNNBL1; the interaction is important for the immunoglobulin switch activity of AICDA. Interacts (via its NLS) with KPNA1. Interacts with PKA/PRKACA and PRKAR1A/PKR1. Interacts with SUPT6H, TRIM28 and NCL. Directly interacts with MCM3AP; this interaction may favor AICDA recruitment to immunoglobulin variable region genes, hence promoting somatic hypermutations (By similarity).</text>
</comment>
<comment type="subcellular location">
    <subcellularLocation>
        <location evidence="3">Nucleus</location>
    </subcellularLocation>
    <subcellularLocation>
        <location evidence="3">Cytoplasm</location>
    </subcellularLocation>
    <text evidence="4">Predominantly cytoplasmic. In the presence of MCM3AP/GANP, relocalizes to the nucleus.</text>
</comment>
<comment type="tissue specificity">
    <text evidence="6">Expressed in thymus, lung, spleen, kidney, small intestine, lymph node and tonsil.</text>
</comment>
<comment type="PTM">
    <text evidence="1">Ser-38 is the major site whereas Thr-27 is the minor site of phosphorylation. Phosphorylation regulates its class-switch recombination activity (By similarity).</text>
</comment>
<comment type="PTM">
    <text evidence="3">Probably monoubiquitinated on several residues by RNF126.</text>
</comment>
<comment type="similarity">
    <text evidence="7">Belongs to the cytidine and deoxycytidylate deaminase family.</text>
</comment>
<accession>Q75W64</accession>
<organism>
    <name type="scientific">Canis lupus familiaris</name>
    <name type="common">Dog</name>
    <name type="synonym">Canis familiaris</name>
    <dbReference type="NCBI Taxonomy" id="9615"/>
    <lineage>
        <taxon>Eukaryota</taxon>
        <taxon>Metazoa</taxon>
        <taxon>Chordata</taxon>
        <taxon>Craniata</taxon>
        <taxon>Vertebrata</taxon>
        <taxon>Euteleostomi</taxon>
        <taxon>Mammalia</taxon>
        <taxon>Eutheria</taxon>
        <taxon>Laurasiatheria</taxon>
        <taxon>Carnivora</taxon>
        <taxon>Caniformia</taxon>
        <taxon>Canidae</taxon>
        <taxon>Canis</taxon>
    </lineage>
</organism>
<reference key="1">
    <citation type="journal article" date="2004" name="J. Vet. Med. Sci.">
        <title>Molecular cloning of canine activation-induced cytidine deaminase (AID) cDNA and its expression in normal tissues.</title>
        <authorList>
            <person name="Ohmori K."/>
            <person name="Maeda S."/>
            <person name="Okayama T."/>
            <person name="Masuda K."/>
            <person name="Ohno K."/>
            <person name="Tsujimoto H."/>
        </authorList>
    </citation>
    <scope>NUCLEOTIDE SEQUENCE [MRNA]</scope>
    <scope>TISSUE SPECIFICITY</scope>
    <source>
        <tissue>Lymph node</tissue>
    </source>
</reference>
<protein>
    <recommendedName>
        <fullName>Single-stranded DNA cytosine deaminase</fullName>
        <ecNumber evidence="3">3.5.4.38</ecNumber>
    </recommendedName>
    <alternativeName>
        <fullName>Activation-induced cytidine deaminase</fullName>
        <shortName>AID</shortName>
    </alternativeName>
    <alternativeName>
        <fullName>Cytidine aminohydrolase</fullName>
    </alternativeName>
</protein>
<dbReference type="EC" id="3.5.4.38" evidence="3"/>
<dbReference type="EMBL" id="AB122019">
    <property type="protein sequence ID" value="BAD15112.1"/>
    <property type="molecule type" value="mRNA"/>
</dbReference>
<dbReference type="RefSeq" id="NP_001003380.1">
    <property type="nucleotide sequence ID" value="NM_001003380.1"/>
</dbReference>
<dbReference type="SMR" id="Q75W64"/>
<dbReference type="FunCoup" id="Q75W64">
    <property type="interactions" value="65"/>
</dbReference>
<dbReference type="STRING" id="9615.ENSCAFP00000056099"/>
<dbReference type="PaxDb" id="9612-ENSCAFP00000020480"/>
<dbReference type="GeneID" id="442983"/>
<dbReference type="KEGG" id="cfa:442983"/>
<dbReference type="CTD" id="57379"/>
<dbReference type="eggNOG" id="KOG4075">
    <property type="taxonomic scope" value="Eukaryota"/>
</dbReference>
<dbReference type="InParanoid" id="Q75W64"/>
<dbReference type="OrthoDB" id="8676111at2759"/>
<dbReference type="Proteomes" id="UP000002254">
    <property type="component" value="Unplaced"/>
</dbReference>
<dbReference type="Proteomes" id="UP000694429">
    <property type="component" value="Unplaced"/>
</dbReference>
<dbReference type="Proteomes" id="UP000694542">
    <property type="component" value="Unplaced"/>
</dbReference>
<dbReference type="Proteomes" id="UP000805418">
    <property type="component" value="Unplaced"/>
</dbReference>
<dbReference type="GO" id="GO:0005737">
    <property type="term" value="C:cytoplasm"/>
    <property type="evidence" value="ECO:0000250"/>
    <property type="project" value="UniProtKB"/>
</dbReference>
<dbReference type="GO" id="GO:0005634">
    <property type="term" value="C:nucleus"/>
    <property type="evidence" value="ECO:0000250"/>
    <property type="project" value="UniProtKB"/>
</dbReference>
<dbReference type="GO" id="GO:0000932">
    <property type="term" value="C:P-body"/>
    <property type="evidence" value="ECO:0000318"/>
    <property type="project" value="GO_Central"/>
</dbReference>
<dbReference type="GO" id="GO:0004126">
    <property type="term" value="F:cytidine deaminase activity"/>
    <property type="evidence" value="ECO:0000250"/>
    <property type="project" value="UniProtKB"/>
</dbReference>
<dbReference type="GO" id="GO:0003723">
    <property type="term" value="F:RNA binding"/>
    <property type="evidence" value="ECO:0000318"/>
    <property type="project" value="GO_Central"/>
</dbReference>
<dbReference type="GO" id="GO:0008270">
    <property type="term" value="F:zinc ion binding"/>
    <property type="evidence" value="ECO:0007669"/>
    <property type="project" value="InterPro"/>
</dbReference>
<dbReference type="GO" id="GO:0009972">
    <property type="term" value="P:cytidine deamination"/>
    <property type="evidence" value="ECO:0000250"/>
    <property type="project" value="UniProtKB"/>
</dbReference>
<dbReference type="GO" id="GO:0016554">
    <property type="term" value="P:cytidine to uridine editing"/>
    <property type="evidence" value="ECO:0000318"/>
    <property type="project" value="GO_Central"/>
</dbReference>
<dbReference type="GO" id="GO:0051607">
    <property type="term" value="P:defense response to virus"/>
    <property type="evidence" value="ECO:0000318"/>
    <property type="project" value="GO_Central"/>
</dbReference>
<dbReference type="GO" id="GO:0070383">
    <property type="term" value="P:DNA cytosine deamination"/>
    <property type="evidence" value="ECO:0000318"/>
    <property type="project" value="GO_Central"/>
</dbReference>
<dbReference type="GO" id="GO:0006397">
    <property type="term" value="P:mRNA processing"/>
    <property type="evidence" value="ECO:0007669"/>
    <property type="project" value="UniProtKB-KW"/>
</dbReference>
<dbReference type="GO" id="GO:0045869">
    <property type="term" value="P:negative regulation of single stranded viral RNA replication via double stranded DNA intermediate"/>
    <property type="evidence" value="ECO:0000318"/>
    <property type="project" value="GO_Central"/>
</dbReference>
<dbReference type="GO" id="GO:0044029">
    <property type="term" value="P:positive regulation of gene expression via chromosomal CpG island demethylation"/>
    <property type="evidence" value="ECO:0000250"/>
    <property type="project" value="UniProtKB"/>
</dbReference>
<dbReference type="GO" id="GO:0016446">
    <property type="term" value="P:somatic hypermutation of immunoglobulin genes"/>
    <property type="evidence" value="ECO:0000250"/>
    <property type="project" value="UniProtKB"/>
</dbReference>
<dbReference type="CDD" id="cd01283">
    <property type="entry name" value="cytidine_deaminase"/>
    <property type="match status" value="1"/>
</dbReference>
<dbReference type="FunFam" id="3.40.140.10:FF:000022">
    <property type="entry name" value="Single-stranded DNA cytosine deaminase"/>
    <property type="match status" value="1"/>
</dbReference>
<dbReference type="Gene3D" id="3.40.140.10">
    <property type="entry name" value="Cytidine Deaminase, domain 2"/>
    <property type="match status" value="1"/>
</dbReference>
<dbReference type="InterPro" id="IPR016192">
    <property type="entry name" value="APOBEC/CMP_deaminase_Zn-bd"/>
</dbReference>
<dbReference type="InterPro" id="IPR050610">
    <property type="entry name" value="APOBEC_Cyt_Deaminase"/>
</dbReference>
<dbReference type="InterPro" id="IPR002125">
    <property type="entry name" value="CMP_dCMP_dom"/>
</dbReference>
<dbReference type="InterPro" id="IPR016193">
    <property type="entry name" value="Cytidine_deaminase-like"/>
</dbReference>
<dbReference type="PANTHER" id="PTHR13857">
    <property type="entry name" value="MRNA EDITING ENZYME"/>
    <property type="match status" value="1"/>
</dbReference>
<dbReference type="PANTHER" id="PTHR13857:SF10">
    <property type="entry name" value="SINGLE-STRANDED DNA CYTOSINE DEAMINASE"/>
    <property type="match status" value="1"/>
</dbReference>
<dbReference type="Pfam" id="PF18778">
    <property type="entry name" value="NAD1"/>
    <property type="match status" value="1"/>
</dbReference>
<dbReference type="SUPFAM" id="SSF53927">
    <property type="entry name" value="Cytidine deaminase-like"/>
    <property type="match status" value="1"/>
</dbReference>
<dbReference type="PROSITE" id="PS00903">
    <property type="entry name" value="CYT_DCMP_DEAMINASES_1"/>
    <property type="match status" value="1"/>
</dbReference>
<dbReference type="PROSITE" id="PS51747">
    <property type="entry name" value="CYT_DCMP_DEAMINASES_2"/>
    <property type="match status" value="1"/>
</dbReference>
<name>AICDA_CANLF</name>